<reference key="1">
    <citation type="journal article" date="2013" name="Proc. Natl. Acad. Sci. U.S.A.">
        <title>Polynucleobacter necessarius, a model for genome reduction in both free-living and symbiotic bacteria.</title>
        <authorList>
            <person name="Boscaro V."/>
            <person name="Felletti M."/>
            <person name="Vannini C."/>
            <person name="Ackerman M.S."/>
            <person name="Chain P.S."/>
            <person name="Malfatti S."/>
            <person name="Vergez L.M."/>
            <person name="Shin M."/>
            <person name="Doak T.G."/>
            <person name="Lynch M."/>
            <person name="Petroni G."/>
        </authorList>
    </citation>
    <scope>NUCLEOTIDE SEQUENCE [LARGE SCALE GENOMIC DNA]</scope>
    <source>
        <strain>STIR1</strain>
    </source>
</reference>
<name>RL28_POLNS</name>
<accession>B1XW20</accession>
<comment type="similarity">
    <text evidence="1">Belongs to the bacterial ribosomal protein bL28 family.</text>
</comment>
<organism>
    <name type="scientific">Polynucleobacter necessarius subsp. necessarius (strain STIR1)</name>
    <dbReference type="NCBI Taxonomy" id="452638"/>
    <lineage>
        <taxon>Bacteria</taxon>
        <taxon>Pseudomonadati</taxon>
        <taxon>Pseudomonadota</taxon>
        <taxon>Betaproteobacteria</taxon>
        <taxon>Burkholderiales</taxon>
        <taxon>Burkholderiaceae</taxon>
        <taxon>Polynucleobacter</taxon>
    </lineage>
</organism>
<evidence type="ECO:0000255" key="1">
    <source>
        <dbReference type="HAMAP-Rule" id="MF_00373"/>
    </source>
</evidence>
<evidence type="ECO:0000305" key="2"/>
<feature type="chain" id="PRO_1000121668" description="Large ribosomal subunit protein bL28">
    <location>
        <begin position="1"/>
        <end position="77"/>
    </location>
</feature>
<keyword id="KW-0687">Ribonucleoprotein</keyword>
<keyword id="KW-0689">Ribosomal protein</keyword>
<gene>
    <name evidence="1" type="primary">rpmB</name>
    <name type="ordered locus">Pnec_1452</name>
</gene>
<sequence>MAKVCQVTGKKPMVGNNVSHAKNKTKRRFLPNLQNRRFWVESENRWISLRLTNAGLRVIDKNGIDAVLSDLRTRGEI</sequence>
<dbReference type="EMBL" id="CP001010">
    <property type="protein sequence ID" value="ACB44547.1"/>
    <property type="molecule type" value="Genomic_DNA"/>
</dbReference>
<dbReference type="SMR" id="B1XW20"/>
<dbReference type="STRING" id="452638.Pnec_1452"/>
<dbReference type="KEGG" id="pne:Pnec_1452"/>
<dbReference type="eggNOG" id="COG0227">
    <property type="taxonomic scope" value="Bacteria"/>
</dbReference>
<dbReference type="HOGENOM" id="CLU_064548_3_1_4"/>
<dbReference type="OrthoDB" id="9805609at2"/>
<dbReference type="GO" id="GO:0022625">
    <property type="term" value="C:cytosolic large ribosomal subunit"/>
    <property type="evidence" value="ECO:0007669"/>
    <property type="project" value="TreeGrafter"/>
</dbReference>
<dbReference type="GO" id="GO:0003735">
    <property type="term" value="F:structural constituent of ribosome"/>
    <property type="evidence" value="ECO:0007669"/>
    <property type="project" value="InterPro"/>
</dbReference>
<dbReference type="GO" id="GO:0006412">
    <property type="term" value="P:translation"/>
    <property type="evidence" value="ECO:0007669"/>
    <property type="project" value="UniProtKB-UniRule"/>
</dbReference>
<dbReference type="FunFam" id="2.30.170.40:FF:000001">
    <property type="entry name" value="50S ribosomal protein L28"/>
    <property type="match status" value="1"/>
</dbReference>
<dbReference type="Gene3D" id="2.30.170.40">
    <property type="entry name" value="Ribosomal protein L28/L24"/>
    <property type="match status" value="1"/>
</dbReference>
<dbReference type="HAMAP" id="MF_00373">
    <property type="entry name" value="Ribosomal_bL28"/>
    <property type="match status" value="1"/>
</dbReference>
<dbReference type="InterPro" id="IPR026569">
    <property type="entry name" value="Ribosomal_bL28"/>
</dbReference>
<dbReference type="InterPro" id="IPR034704">
    <property type="entry name" value="Ribosomal_bL28/bL31-like_sf"/>
</dbReference>
<dbReference type="InterPro" id="IPR001383">
    <property type="entry name" value="Ribosomal_bL28_bact-type"/>
</dbReference>
<dbReference type="InterPro" id="IPR037147">
    <property type="entry name" value="Ribosomal_bL28_sf"/>
</dbReference>
<dbReference type="NCBIfam" id="TIGR00009">
    <property type="entry name" value="L28"/>
    <property type="match status" value="1"/>
</dbReference>
<dbReference type="PANTHER" id="PTHR13528">
    <property type="entry name" value="39S RIBOSOMAL PROTEIN L28, MITOCHONDRIAL"/>
    <property type="match status" value="1"/>
</dbReference>
<dbReference type="PANTHER" id="PTHR13528:SF2">
    <property type="entry name" value="LARGE RIBOSOMAL SUBUNIT PROTEIN BL28M"/>
    <property type="match status" value="1"/>
</dbReference>
<dbReference type="Pfam" id="PF00830">
    <property type="entry name" value="Ribosomal_L28"/>
    <property type="match status" value="1"/>
</dbReference>
<dbReference type="SUPFAM" id="SSF143800">
    <property type="entry name" value="L28p-like"/>
    <property type="match status" value="1"/>
</dbReference>
<protein>
    <recommendedName>
        <fullName evidence="1">Large ribosomal subunit protein bL28</fullName>
    </recommendedName>
    <alternativeName>
        <fullName evidence="2">50S ribosomal protein L28</fullName>
    </alternativeName>
</protein>
<proteinExistence type="inferred from homology"/>